<protein>
    <recommendedName>
        <fullName evidence="1">Cell cycle protein GpsB</fullName>
    </recommendedName>
    <alternativeName>
        <fullName evidence="1">Guiding PBP1-shuttling protein</fullName>
    </alternativeName>
</protein>
<accession>Q9KC05</accession>
<organism>
    <name type="scientific">Halalkalibacterium halodurans (strain ATCC BAA-125 / DSM 18197 / FERM 7344 / JCM 9153 / C-125)</name>
    <name type="common">Bacillus halodurans</name>
    <dbReference type="NCBI Taxonomy" id="272558"/>
    <lineage>
        <taxon>Bacteria</taxon>
        <taxon>Bacillati</taxon>
        <taxon>Bacillota</taxon>
        <taxon>Bacilli</taxon>
        <taxon>Bacillales</taxon>
        <taxon>Bacillaceae</taxon>
        <taxon>Halalkalibacterium (ex Joshi et al. 2022)</taxon>
    </lineage>
</organism>
<sequence length="104" mass="12403">MYNQEVKLTTKEILEKEFKTSMRGYSQDEVDKFLDVVIQDYEVFQKKIERLEQEIHQLRTEAKRAASERQTRHQTSPSVGSTNYDILQRLSNLEKKVFGNKLYE</sequence>
<evidence type="ECO:0000255" key="1">
    <source>
        <dbReference type="HAMAP-Rule" id="MF_02011"/>
    </source>
</evidence>
<evidence type="ECO:0000256" key="2">
    <source>
        <dbReference type="SAM" id="MobiDB-lite"/>
    </source>
</evidence>
<gene>
    <name evidence="1" type="primary">gpsB</name>
    <name type="ordered locus">BH1769</name>
</gene>
<reference key="1">
    <citation type="journal article" date="2000" name="Nucleic Acids Res.">
        <title>Complete genome sequence of the alkaliphilic bacterium Bacillus halodurans and genomic sequence comparison with Bacillus subtilis.</title>
        <authorList>
            <person name="Takami H."/>
            <person name="Nakasone K."/>
            <person name="Takaki Y."/>
            <person name="Maeno G."/>
            <person name="Sasaki R."/>
            <person name="Masui N."/>
            <person name="Fuji F."/>
            <person name="Hirama C."/>
            <person name="Nakamura Y."/>
            <person name="Ogasawara N."/>
            <person name="Kuhara S."/>
            <person name="Horikoshi K."/>
        </authorList>
    </citation>
    <scope>NUCLEOTIDE SEQUENCE [LARGE SCALE GENOMIC DNA]</scope>
    <source>
        <strain>ATCC BAA-125 / DSM 18197 / FERM 7344 / JCM 9153 / C-125</strain>
    </source>
</reference>
<feature type="chain" id="PRO_0000337912" description="Cell cycle protein GpsB">
    <location>
        <begin position="1"/>
        <end position="104"/>
    </location>
</feature>
<feature type="region of interest" description="Disordered" evidence="2">
    <location>
        <begin position="60"/>
        <end position="82"/>
    </location>
</feature>
<feature type="coiled-coil region" evidence="1">
    <location>
        <begin position="34"/>
        <end position="72"/>
    </location>
</feature>
<feature type="compositionally biased region" description="Basic and acidic residues" evidence="2">
    <location>
        <begin position="60"/>
        <end position="71"/>
    </location>
</feature>
<feature type="compositionally biased region" description="Polar residues" evidence="2">
    <location>
        <begin position="73"/>
        <end position="82"/>
    </location>
</feature>
<name>GPSB_HALH5</name>
<proteinExistence type="inferred from homology"/>
<keyword id="KW-0131">Cell cycle</keyword>
<keyword id="KW-0132">Cell division</keyword>
<keyword id="KW-0133">Cell shape</keyword>
<keyword id="KW-0175">Coiled coil</keyword>
<keyword id="KW-0963">Cytoplasm</keyword>
<keyword id="KW-1185">Reference proteome</keyword>
<comment type="function">
    <text evidence="1">Divisome component that associates with the complex late in its assembly, after the Z-ring is formed, and is dependent on DivIC and PBP2B for its recruitment to the divisome. Together with EzrA, is a key component of the system that regulates PBP1 localization during cell cycle progression. Its main role could be the removal of PBP1 from the cell pole after pole maturation is completed. Also contributes to the recruitment of PBP1 to the division complex. Not essential for septum formation.</text>
</comment>
<comment type="subunit">
    <text evidence="1">Forms polymers through the coiled coil domains. Interacts with PBP1, MreC and EzrA.</text>
</comment>
<comment type="subcellular location">
    <subcellularLocation>
        <location evidence="1">Cytoplasm</location>
    </subcellularLocation>
    <text evidence="1">Shuttles between the lateral wall and the division site in a cell cycle-dependent manner.</text>
</comment>
<comment type="similarity">
    <text evidence="1">Belongs to the GpsB family.</text>
</comment>
<dbReference type="EMBL" id="BA000004">
    <property type="protein sequence ID" value="BAB05488.1"/>
    <property type="molecule type" value="Genomic_DNA"/>
</dbReference>
<dbReference type="PIR" id="A83871">
    <property type="entry name" value="A83871"/>
</dbReference>
<dbReference type="RefSeq" id="WP_010897930.1">
    <property type="nucleotide sequence ID" value="NC_002570.2"/>
</dbReference>
<dbReference type="SMR" id="Q9KC05"/>
<dbReference type="STRING" id="272558.gene:10727667"/>
<dbReference type="GeneID" id="87597378"/>
<dbReference type="KEGG" id="bha:BH1769"/>
<dbReference type="eggNOG" id="COG3599">
    <property type="taxonomic scope" value="Bacteria"/>
</dbReference>
<dbReference type="HOGENOM" id="CLU_140309_1_0_9"/>
<dbReference type="OrthoDB" id="389699at2"/>
<dbReference type="Proteomes" id="UP000001258">
    <property type="component" value="Chromosome"/>
</dbReference>
<dbReference type="GO" id="GO:0005737">
    <property type="term" value="C:cytoplasm"/>
    <property type="evidence" value="ECO:0007669"/>
    <property type="project" value="UniProtKB-SubCell"/>
</dbReference>
<dbReference type="GO" id="GO:0051301">
    <property type="term" value="P:cell division"/>
    <property type="evidence" value="ECO:0007669"/>
    <property type="project" value="UniProtKB-UniRule"/>
</dbReference>
<dbReference type="GO" id="GO:0008360">
    <property type="term" value="P:regulation of cell shape"/>
    <property type="evidence" value="ECO:0007669"/>
    <property type="project" value="UniProtKB-UniRule"/>
</dbReference>
<dbReference type="Gene3D" id="6.10.250.660">
    <property type="match status" value="1"/>
</dbReference>
<dbReference type="HAMAP" id="MF_02011">
    <property type="entry name" value="GpsB"/>
    <property type="match status" value="1"/>
</dbReference>
<dbReference type="InterPro" id="IPR011229">
    <property type="entry name" value="Cell_cycle_GpsB"/>
</dbReference>
<dbReference type="InterPro" id="IPR019933">
    <property type="entry name" value="DivIVA_domain"/>
</dbReference>
<dbReference type="InterPro" id="IPR007793">
    <property type="entry name" value="DivIVA_fam"/>
</dbReference>
<dbReference type="NCBIfam" id="TIGR03544">
    <property type="entry name" value="DivI1A_domain"/>
    <property type="match status" value="1"/>
</dbReference>
<dbReference type="NCBIfam" id="NF010725">
    <property type="entry name" value="PRK14127.1"/>
    <property type="match status" value="1"/>
</dbReference>
<dbReference type="PANTHER" id="PTHR35794:SF1">
    <property type="entry name" value="CELL CYCLE PROTEIN GPSB"/>
    <property type="match status" value="1"/>
</dbReference>
<dbReference type="PANTHER" id="PTHR35794">
    <property type="entry name" value="CELL DIVISION PROTEIN DIVIVA"/>
    <property type="match status" value="1"/>
</dbReference>
<dbReference type="Pfam" id="PF05103">
    <property type="entry name" value="DivIVA"/>
    <property type="match status" value="1"/>
</dbReference>
<dbReference type="PIRSF" id="PIRSF029938">
    <property type="entry name" value="UCP029938"/>
    <property type="match status" value="1"/>
</dbReference>